<evidence type="ECO:0000255" key="1">
    <source>
        <dbReference type="HAMAP-Rule" id="MF_00080"/>
    </source>
</evidence>
<dbReference type="EMBL" id="CP000720">
    <property type="protein sequence ID" value="ABS47755.1"/>
    <property type="molecule type" value="Genomic_DNA"/>
</dbReference>
<dbReference type="RefSeq" id="WP_002227898.1">
    <property type="nucleotide sequence ID" value="NC_009708.1"/>
</dbReference>
<dbReference type="SMR" id="A7FHG2"/>
<dbReference type="GeneID" id="66879647"/>
<dbReference type="KEGG" id="ypi:YpsIP31758_1713"/>
<dbReference type="HOGENOM" id="CLU_054919_3_2_6"/>
<dbReference type="Proteomes" id="UP000002412">
    <property type="component" value="Chromosome"/>
</dbReference>
<dbReference type="GO" id="GO:0005829">
    <property type="term" value="C:cytosol"/>
    <property type="evidence" value="ECO:0007669"/>
    <property type="project" value="TreeGrafter"/>
</dbReference>
<dbReference type="GO" id="GO:0016020">
    <property type="term" value="C:membrane"/>
    <property type="evidence" value="ECO:0007669"/>
    <property type="project" value="TreeGrafter"/>
</dbReference>
<dbReference type="GO" id="GO:0043022">
    <property type="term" value="F:ribosome binding"/>
    <property type="evidence" value="ECO:0007669"/>
    <property type="project" value="TreeGrafter"/>
</dbReference>
<dbReference type="GO" id="GO:0003743">
    <property type="term" value="F:translation initiation factor activity"/>
    <property type="evidence" value="ECO:0007669"/>
    <property type="project" value="UniProtKB-UniRule"/>
</dbReference>
<dbReference type="GO" id="GO:0032790">
    <property type="term" value="P:ribosome disassembly"/>
    <property type="evidence" value="ECO:0007669"/>
    <property type="project" value="TreeGrafter"/>
</dbReference>
<dbReference type="FunFam" id="3.10.20.80:FF:000001">
    <property type="entry name" value="Translation initiation factor IF-3"/>
    <property type="match status" value="1"/>
</dbReference>
<dbReference type="FunFam" id="3.30.110.10:FF:000001">
    <property type="entry name" value="Translation initiation factor IF-3"/>
    <property type="match status" value="1"/>
</dbReference>
<dbReference type="Gene3D" id="3.30.110.10">
    <property type="entry name" value="Translation initiation factor 3 (IF-3), C-terminal domain"/>
    <property type="match status" value="1"/>
</dbReference>
<dbReference type="Gene3D" id="3.10.20.80">
    <property type="entry name" value="Translation initiation factor 3 (IF-3), N-terminal domain"/>
    <property type="match status" value="1"/>
</dbReference>
<dbReference type="HAMAP" id="MF_00080">
    <property type="entry name" value="IF_3"/>
    <property type="match status" value="1"/>
</dbReference>
<dbReference type="InterPro" id="IPR036788">
    <property type="entry name" value="T_IF-3_C_sf"/>
</dbReference>
<dbReference type="InterPro" id="IPR036787">
    <property type="entry name" value="T_IF-3_N_sf"/>
</dbReference>
<dbReference type="InterPro" id="IPR019813">
    <property type="entry name" value="Translation_initiation_fac3_CS"/>
</dbReference>
<dbReference type="InterPro" id="IPR001288">
    <property type="entry name" value="Translation_initiation_fac_3"/>
</dbReference>
<dbReference type="InterPro" id="IPR019815">
    <property type="entry name" value="Translation_initiation_fac_3_C"/>
</dbReference>
<dbReference type="InterPro" id="IPR019814">
    <property type="entry name" value="Translation_initiation_fac_3_N"/>
</dbReference>
<dbReference type="NCBIfam" id="TIGR00168">
    <property type="entry name" value="infC"/>
    <property type="match status" value="1"/>
</dbReference>
<dbReference type="PANTHER" id="PTHR10938">
    <property type="entry name" value="TRANSLATION INITIATION FACTOR IF-3"/>
    <property type="match status" value="1"/>
</dbReference>
<dbReference type="PANTHER" id="PTHR10938:SF0">
    <property type="entry name" value="TRANSLATION INITIATION FACTOR IF-3, MITOCHONDRIAL"/>
    <property type="match status" value="1"/>
</dbReference>
<dbReference type="Pfam" id="PF00707">
    <property type="entry name" value="IF3_C"/>
    <property type="match status" value="1"/>
</dbReference>
<dbReference type="Pfam" id="PF05198">
    <property type="entry name" value="IF3_N"/>
    <property type="match status" value="1"/>
</dbReference>
<dbReference type="SUPFAM" id="SSF55200">
    <property type="entry name" value="Translation initiation factor IF3, C-terminal domain"/>
    <property type="match status" value="1"/>
</dbReference>
<dbReference type="SUPFAM" id="SSF54364">
    <property type="entry name" value="Translation initiation factor IF3, N-terminal domain"/>
    <property type="match status" value="1"/>
</dbReference>
<dbReference type="PROSITE" id="PS00938">
    <property type="entry name" value="IF3"/>
    <property type="match status" value="1"/>
</dbReference>
<accession>A7FHG2</accession>
<comment type="function">
    <text evidence="1">IF-3 binds to the 30S ribosomal subunit and shifts the equilibrium between 70S ribosomes and their 50S and 30S subunits in favor of the free subunits, thus enhancing the availability of 30S subunits on which protein synthesis initiation begins.</text>
</comment>
<comment type="subunit">
    <text evidence="1">Monomer.</text>
</comment>
<comment type="subcellular location">
    <subcellularLocation>
        <location evidence="1">Cytoplasm</location>
    </subcellularLocation>
</comment>
<comment type="similarity">
    <text evidence="1">Belongs to the IF-3 family.</text>
</comment>
<reference key="1">
    <citation type="journal article" date="2007" name="PLoS Genet.">
        <title>The complete genome sequence of Yersinia pseudotuberculosis IP31758, the causative agent of Far East scarlet-like fever.</title>
        <authorList>
            <person name="Eppinger M."/>
            <person name="Rosovitz M.J."/>
            <person name="Fricke W.F."/>
            <person name="Rasko D.A."/>
            <person name="Kokorina G."/>
            <person name="Fayolle C."/>
            <person name="Lindler L.E."/>
            <person name="Carniel E."/>
            <person name="Ravel J."/>
        </authorList>
    </citation>
    <scope>NUCLEOTIDE SEQUENCE [LARGE SCALE GENOMIC DNA]</scope>
    <source>
        <strain>IP 31758</strain>
    </source>
</reference>
<feature type="chain" id="PRO_1000057532" description="Translation initiation factor IF-3">
    <location>
        <begin position="1"/>
        <end position="183"/>
    </location>
</feature>
<proteinExistence type="inferred from homology"/>
<organism>
    <name type="scientific">Yersinia pseudotuberculosis serotype O:1b (strain IP 31758)</name>
    <dbReference type="NCBI Taxonomy" id="349747"/>
    <lineage>
        <taxon>Bacteria</taxon>
        <taxon>Pseudomonadati</taxon>
        <taxon>Pseudomonadota</taxon>
        <taxon>Gammaproteobacteria</taxon>
        <taxon>Enterobacterales</taxon>
        <taxon>Yersiniaceae</taxon>
        <taxon>Yersinia</taxon>
    </lineage>
</organism>
<gene>
    <name evidence="1" type="primary">infC</name>
    <name type="ordered locus">YpsIP31758_1713</name>
</gene>
<name>IF3_YERP3</name>
<protein>
    <recommendedName>
        <fullName evidence="1">Translation initiation factor IF-3</fullName>
    </recommendedName>
</protein>
<sequence length="183" mass="20936">MKGGKRVQPARPNRINKEIRATEVRLTGVDGEQIGIVSLNEALEKAEEAGVDLVEISPNAEPPVCRIMDYGKFLYEKSKSTKEQKKKQKVIQVKEIKFRPGTDDGDYQVKLRNLIRFLEDGDKAKITLRFRGREMAHQQIGMEVLNRVRKDLCEDSDLAVVESFPTRIEGRQMIMVLAPKKRQ</sequence>
<keyword id="KW-0963">Cytoplasm</keyword>
<keyword id="KW-0396">Initiation factor</keyword>
<keyword id="KW-0648">Protein biosynthesis</keyword>